<protein>
    <recommendedName>
        <fullName evidence="1">Phospho-N-acetylmuramoyl-pentapeptide-transferase</fullName>
        <ecNumber evidence="1">2.7.8.13</ecNumber>
    </recommendedName>
    <alternativeName>
        <fullName evidence="1">UDP-MurNAc-pentapeptide phosphotransferase</fullName>
    </alternativeName>
</protein>
<gene>
    <name evidence="1" type="primary">mraY</name>
    <name type="ordered locus">GM21_0505</name>
</gene>
<sequence length="358" mass="39375">MLYHLLYPLAADYKLFNVFKYLTFRSIYAMITALLLAFIVGPWVVRKLEALQARQVIRTDGPESHLKKQGTPTMGGVLILVCIVVPTLLWADLKNVFIWLTLLIIVGYGVLGFVDDYKKVVEKNPKGLSPRQKMFWQVLLAAGVGIFLFYLPGFSTELYLPFFKRVHPELGILFIPFVTLVIVGASNAVNLTDGLDGLAIGPVAINAGTYLLFCYIAGNARLSGYLQIPYVPGAGELAVLCGAMVGAGLGFLWYNSYPAEVFMGDVGSLSLGGALGTLAVLTKQEILLVIVGGVFVVEALSVIFQVGSYKYRGKRIFRMAPIHHHFELKGVAEPKIIVRFWIITIILALVAISTLKMR</sequence>
<feature type="chain" id="PRO_1000202069" description="Phospho-N-acetylmuramoyl-pentapeptide-transferase">
    <location>
        <begin position="1"/>
        <end position="358"/>
    </location>
</feature>
<feature type="transmembrane region" description="Helical" evidence="1">
    <location>
        <begin position="24"/>
        <end position="44"/>
    </location>
</feature>
<feature type="transmembrane region" description="Helical" evidence="1">
    <location>
        <begin position="73"/>
        <end position="93"/>
    </location>
</feature>
<feature type="transmembrane region" description="Helical" evidence="1">
    <location>
        <begin position="95"/>
        <end position="115"/>
    </location>
</feature>
<feature type="transmembrane region" description="Helical" evidence="1">
    <location>
        <begin position="134"/>
        <end position="154"/>
    </location>
</feature>
<feature type="transmembrane region" description="Helical" evidence="1">
    <location>
        <begin position="169"/>
        <end position="189"/>
    </location>
</feature>
<feature type="transmembrane region" description="Helical" evidence="1">
    <location>
        <begin position="197"/>
        <end position="217"/>
    </location>
</feature>
<feature type="transmembrane region" description="Helical" evidence="1">
    <location>
        <begin position="233"/>
        <end position="253"/>
    </location>
</feature>
<feature type="transmembrane region" description="Helical" evidence="1">
    <location>
        <begin position="261"/>
        <end position="281"/>
    </location>
</feature>
<feature type="transmembrane region" description="Helical" evidence="1">
    <location>
        <begin position="286"/>
        <end position="306"/>
    </location>
</feature>
<feature type="transmembrane region" description="Helical" evidence="1">
    <location>
        <begin position="335"/>
        <end position="355"/>
    </location>
</feature>
<accession>C6DZK3</accession>
<comment type="function">
    <text evidence="1">Catalyzes the initial step of the lipid cycle reactions in the biosynthesis of the cell wall peptidoglycan: transfers peptidoglycan precursor phospho-MurNAc-pentapeptide from UDP-MurNAc-pentapeptide onto the lipid carrier undecaprenyl phosphate, yielding undecaprenyl-pyrophosphoryl-MurNAc-pentapeptide, known as lipid I.</text>
</comment>
<comment type="catalytic activity">
    <reaction evidence="1">
        <text>UDP-N-acetyl-alpha-D-muramoyl-L-alanyl-gamma-D-glutamyl-meso-2,6-diaminopimeloyl-D-alanyl-D-alanine + di-trans,octa-cis-undecaprenyl phosphate = di-trans,octa-cis-undecaprenyl diphospho-N-acetyl-alpha-D-muramoyl-L-alanyl-D-glutamyl-meso-2,6-diaminopimeloyl-D-alanyl-D-alanine + UMP</text>
        <dbReference type="Rhea" id="RHEA:28386"/>
        <dbReference type="ChEBI" id="CHEBI:57865"/>
        <dbReference type="ChEBI" id="CHEBI:60392"/>
        <dbReference type="ChEBI" id="CHEBI:61386"/>
        <dbReference type="ChEBI" id="CHEBI:61387"/>
        <dbReference type="EC" id="2.7.8.13"/>
    </reaction>
</comment>
<comment type="cofactor">
    <cofactor evidence="1">
        <name>Mg(2+)</name>
        <dbReference type="ChEBI" id="CHEBI:18420"/>
    </cofactor>
</comment>
<comment type="pathway">
    <text evidence="1">Cell wall biogenesis; peptidoglycan biosynthesis.</text>
</comment>
<comment type="subcellular location">
    <subcellularLocation>
        <location evidence="1">Cell inner membrane</location>
        <topology evidence="1">Multi-pass membrane protein</topology>
    </subcellularLocation>
</comment>
<comment type="similarity">
    <text evidence="1">Belongs to the glycosyltransferase 4 family. MraY subfamily.</text>
</comment>
<proteinExistence type="inferred from homology"/>
<dbReference type="EC" id="2.7.8.13" evidence="1"/>
<dbReference type="EMBL" id="CP001661">
    <property type="protein sequence ID" value="ACT16585.1"/>
    <property type="molecule type" value="Genomic_DNA"/>
</dbReference>
<dbReference type="SMR" id="C6DZK3"/>
<dbReference type="STRING" id="443144.GM21_0505"/>
<dbReference type="KEGG" id="gem:GM21_0505"/>
<dbReference type="eggNOG" id="COG0472">
    <property type="taxonomic scope" value="Bacteria"/>
</dbReference>
<dbReference type="HOGENOM" id="CLU_023982_0_0_7"/>
<dbReference type="OrthoDB" id="9805475at2"/>
<dbReference type="UniPathway" id="UPA00219"/>
<dbReference type="GO" id="GO:0005886">
    <property type="term" value="C:plasma membrane"/>
    <property type="evidence" value="ECO:0007669"/>
    <property type="project" value="UniProtKB-SubCell"/>
</dbReference>
<dbReference type="GO" id="GO:0046872">
    <property type="term" value="F:metal ion binding"/>
    <property type="evidence" value="ECO:0007669"/>
    <property type="project" value="UniProtKB-KW"/>
</dbReference>
<dbReference type="GO" id="GO:0008963">
    <property type="term" value="F:phospho-N-acetylmuramoyl-pentapeptide-transferase activity"/>
    <property type="evidence" value="ECO:0007669"/>
    <property type="project" value="UniProtKB-UniRule"/>
</dbReference>
<dbReference type="GO" id="GO:0051992">
    <property type="term" value="F:UDP-N-acetylmuramoyl-L-alanyl-D-glutamyl-meso-2,6-diaminopimelyl-D-alanyl-D-alanine:undecaprenyl-phosphate transferase activity"/>
    <property type="evidence" value="ECO:0007669"/>
    <property type="project" value="RHEA"/>
</dbReference>
<dbReference type="GO" id="GO:0051301">
    <property type="term" value="P:cell division"/>
    <property type="evidence" value="ECO:0007669"/>
    <property type="project" value="UniProtKB-KW"/>
</dbReference>
<dbReference type="GO" id="GO:0071555">
    <property type="term" value="P:cell wall organization"/>
    <property type="evidence" value="ECO:0007669"/>
    <property type="project" value="UniProtKB-KW"/>
</dbReference>
<dbReference type="GO" id="GO:0009252">
    <property type="term" value="P:peptidoglycan biosynthetic process"/>
    <property type="evidence" value="ECO:0007669"/>
    <property type="project" value="UniProtKB-UniRule"/>
</dbReference>
<dbReference type="GO" id="GO:0008360">
    <property type="term" value="P:regulation of cell shape"/>
    <property type="evidence" value="ECO:0007669"/>
    <property type="project" value="UniProtKB-KW"/>
</dbReference>
<dbReference type="CDD" id="cd06852">
    <property type="entry name" value="GT_MraY"/>
    <property type="match status" value="1"/>
</dbReference>
<dbReference type="HAMAP" id="MF_00038">
    <property type="entry name" value="MraY"/>
    <property type="match status" value="1"/>
</dbReference>
<dbReference type="InterPro" id="IPR000715">
    <property type="entry name" value="Glycosyl_transferase_4"/>
</dbReference>
<dbReference type="InterPro" id="IPR003524">
    <property type="entry name" value="PNAcMuramoyl-5peptid_Trfase"/>
</dbReference>
<dbReference type="InterPro" id="IPR018480">
    <property type="entry name" value="PNAcMuramoyl-5peptid_Trfase_CS"/>
</dbReference>
<dbReference type="NCBIfam" id="TIGR00445">
    <property type="entry name" value="mraY"/>
    <property type="match status" value="1"/>
</dbReference>
<dbReference type="PANTHER" id="PTHR22926">
    <property type="entry name" value="PHOSPHO-N-ACETYLMURAMOYL-PENTAPEPTIDE-TRANSFERASE"/>
    <property type="match status" value="1"/>
</dbReference>
<dbReference type="PANTHER" id="PTHR22926:SF5">
    <property type="entry name" value="PHOSPHO-N-ACETYLMURAMOYL-PENTAPEPTIDE-TRANSFERASE HOMOLOG"/>
    <property type="match status" value="1"/>
</dbReference>
<dbReference type="Pfam" id="PF00953">
    <property type="entry name" value="Glycos_transf_4"/>
    <property type="match status" value="1"/>
</dbReference>
<dbReference type="Pfam" id="PF10555">
    <property type="entry name" value="MraY_sig1"/>
    <property type="match status" value="1"/>
</dbReference>
<dbReference type="PROSITE" id="PS01347">
    <property type="entry name" value="MRAY_1"/>
    <property type="match status" value="1"/>
</dbReference>
<dbReference type="PROSITE" id="PS01348">
    <property type="entry name" value="MRAY_2"/>
    <property type="match status" value="1"/>
</dbReference>
<evidence type="ECO:0000255" key="1">
    <source>
        <dbReference type="HAMAP-Rule" id="MF_00038"/>
    </source>
</evidence>
<keyword id="KW-0131">Cell cycle</keyword>
<keyword id="KW-0132">Cell division</keyword>
<keyword id="KW-0997">Cell inner membrane</keyword>
<keyword id="KW-1003">Cell membrane</keyword>
<keyword id="KW-0133">Cell shape</keyword>
<keyword id="KW-0961">Cell wall biogenesis/degradation</keyword>
<keyword id="KW-0460">Magnesium</keyword>
<keyword id="KW-0472">Membrane</keyword>
<keyword id="KW-0479">Metal-binding</keyword>
<keyword id="KW-0573">Peptidoglycan synthesis</keyword>
<keyword id="KW-0808">Transferase</keyword>
<keyword id="KW-0812">Transmembrane</keyword>
<keyword id="KW-1133">Transmembrane helix</keyword>
<name>MRAY_GEOSM</name>
<organism>
    <name type="scientific">Geobacter sp. (strain M21)</name>
    <dbReference type="NCBI Taxonomy" id="443144"/>
    <lineage>
        <taxon>Bacteria</taxon>
        <taxon>Pseudomonadati</taxon>
        <taxon>Thermodesulfobacteriota</taxon>
        <taxon>Desulfuromonadia</taxon>
        <taxon>Geobacterales</taxon>
        <taxon>Geobacteraceae</taxon>
        <taxon>Geobacter</taxon>
    </lineage>
</organism>
<reference key="1">
    <citation type="submission" date="2009-07" db="EMBL/GenBank/DDBJ databases">
        <title>Complete sequence of Geobacter sp. M21.</title>
        <authorList>
            <consortium name="US DOE Joint Genome Institute"/>
            <person name="Lucas S."/>
            <person name="Copeland A."/>
            <person name="Lapidus A."/>
            <person name="Glavina del Rio T."/>
            <person name="Dalin E."/>
            <person name="Tice H."/>
            <person name="Bruce D."/>
            <person name="Goodwin L."/>
            <person name="Pitluck S."/>
            <person name="Saunders E."/>
            <person name="Brettin T."/>
            <person name="Detter J.C."/>
            <person name="Han C."/>
            <person name="Larimer F."/>
            <person name="Land M."/>
            <person name="Hauser L."/>
            <person name="Kyrpides N."/>
            <person name="Ovchinnikova G."/>
            <person name="Lovley D."/>
        </authorList>
    </citation>
    <scope>NUCLEOTIDE SEQUENCE [LARGE SCALE GENOMIC DNA]</scope>
    <source>
        <strain>M21</strain>
    </source>
</reference>